<protein>
    <recommendedName>
        <fullName evidence="1">Chaperone SurA</fullName>
    </recommendedName>
    <alternativeName>
        <fullName evidence="1">Peptidyl-prolyl cis-trans isomerase SurA</fullName>
        <shortName evidence="1">PPIase SurA</shortName>
        <ecNumber evidence="1">5.2.1.8</ecNumber>
    </alternativeName>
    <alternativeName>
        <fullName evidence="1">Rotamase SurA</fullName>
    </alternativeName>
</protein>
<gene>
    <name evidence="1" type="primary">surA</name>
    <name type="ordered locus">Z0062</name>
    <name type="ordered locus">ECs0058</name>
</gene>
<accession>P0ABZ8</accession>
<accession>P21202</accession>
<accession>P75630</accession>
<accession>Q8KIP6</accession>
<accession>Q8KMY0</accession>
<feature type="signal peptide" evidence="1">
    <location>
        <begin position="1"/>
        <end position="20"/>
    </location>
</feature>
<feature type="chain" id="PRO_0000042802" description="Chaperone SurA">
    <location>
        <begin position="21"/>
        <end position="428"/>
    </location>
</feature>
<feature type="domain" description="PpiC 1" evidence="1">
    <location>
        <begin position="171"/>
        <end position="272"/>
    </location>
</feature>
<feature type="domain" description="PpiC 2" evidence="1">
    <location>
        <begin position="282"/>
        <end position="382"/>
    </location>
</feature>
<keyword id="KW-0143">Chaperone</keyword>
<keyword id="KW-0413">Isomerase</keyword>
<keyword id="KW-0574">Periplasm</keyword>
<keyword id="KW-1185">Reference proteome</keyword>
<keyword id="KW-0677">Repeat</keyword>
<keyword id="KW-0697">Rotamase</keyword>
<keyword id="KW-0732">Signal</keyword>
<organism>
    <name type="scientific">Escherichia coli O157:H7</name>
    <dbReference type="NCBI Taxonomy" id="83334"/>
    <lineage>
        <taxon>Bacteria</taxon>
        <taxon>Pseudomonadati</taxon>
        <taxon>Pseudomonadota</taxon>
        <taxon>Gammaproteobacteria</taxon>
        <taxon>Enterobacterales</taxon>
        <taxon>Enterobacteriaceae</taxon>
        <taxon>Escherichia</taxon>
    </lineage>
</organism>
<sequence>MKNWKTLLLGIAMIANTSFAAPQVVDKVAAVVNNGVVLESDVDGLMQSVKLNAAQARQQLPDDATLRHQIMERLIMDQIILQMGQKMGVKISDEQLDQAIANIAKQNNMTLDQMRSRLAYDGLNYNTYRNQIRKEMIISEVRNNEVRRRITILPQEVESLAQQVGNQNDASTELNLSHILIPLPENPTSDQVNEAESQARAIVDQARNGADFGKLAIAHSADQQALNGGQMGWGRIQELPGIFAQALSTAKKGDIVGPIRSGVGFHILKVNDLRGESKNISVTEVHARHILLKPSPIMTDEQARVKLEQIAADIKSGKTTFAAAAKEFSQDPGSANQGGDLGWATPDIFDPAFRDALTRLNKGQMSAPVHSSFGWHLIELLDTRNVDKTDAAQKDRAYRMLMNRKFSEEAASWMQEQRASAYVKILSN</sequence>
<comment type="function">
    <text evidence="1">Chaperone involved in the correct folding and assembly of outer membrane proteins. Recognizes specific patterns of aromatic residues and the orientation of their side chains, which are found more frequently in integral outer membrane proteins. May act in both early periplasmic and late outer membrane-associated steps of protein maturation.</text>
</comment>
<comment type="catalytic activity">
    <reaction evidence="1">
        <text>[protein]-peptidylproline (omega=180) = [protein]-peptidylproline (omega=0)</text>
        <dbReference type="Rhea" id="RHEA:16237"/>
        <dbReference type="Rhea" id="RHEA-COMP:10747"/>
        <dbReference type="Rhea" id="RHEA-COMP:10748"/>
        <dbReference type="ChEBI" id="CHEBI:83833"/>
        <dbReference type="ChEBI" id="CHEBI:83834"/>
        <dbReference type="EC" id="5.2.1.8"/>
    </reaction>
</comment>
<comment type="interaction">
    <interactant intactId="EBI-6408783">
        <id>P0ABZ8</id>
    </interactant>
    <interactant intactId="EBI-6408724">
        <id>Q7BSW5</id>
        <label>espP</label>
    </interactant>
    <organismsDiffer>false</organismsDiffer>
    <experiments>3</experiments>
</comment>
<comment type="subcellular location">
    <subcellularLocation>
        <location evidence="1">Periplasm</location>
    </subcellularLocation>
    <text evidence="1">Is capable of associating with the outer membrane.</text>
</comment>
<comment type="domain">
    <text evidence="1">The PPIase activity resides only in the second parvulin domain. The N-terminal region and the C-terminal tail are necessary and sufficient for the chaperone activity of SurA. The PPIase activity is dispensable for SurA to function as a chaperone. The N-terminal region and the C-terminal tail are also required for porin recognition.</text>
</comment>
<name>SURA_ECO57</name>
<evidence type="ECO:0000255" key="1">
    <source>
        <dbReference type="HAMAP-Rule" id="MF_01183"/>
    </source>
</evidence>
<proteinExistence type="evidence at protein level"/>
<dbReference type="EC" id="5.2.1.8" evidence="1"/>
<dbReference type="EMBL" id="AE005174">
    <property type="protein sequence ID" value="AAG54358.1"/>
    <property type="molecule type" value="Genomic_DNA"/>
</dbReference>
<dbReference type="EMBL" id="BA000007">
    <property type="protein sequence ID" value="BAB33481.1"/>
    <property type="molecule type" value="Genomic_DNA"/>
</dbReference>
<dbReference type="PIR" id="B85487">
    <property type="entry name" value="B85487"/>
</dbReference>
<dbReference type="PIR" id="B90636">
    <property type="entry name" value="B90636"/>
</dbReference>
<dbReference type="RefSeq" id="NP_308085.1">
    <property type="nucleotide sequence ID" value="NC_002695.1"/>
</dbReference>
<dbReference type="RefSeq" id="WP_000800457.1">
    <property type="nucleotide sequence ID" value="NZ_VOAI01000002.1"/>
</dbReference>
<dbReference type="SMR" id="P0ABZ8"/>
<dbReference type="IntAct" id="P0ABZ8">
    <property type="interactions" value="1"/>
</dbReference>
<dbReference type="STRING" id="155864.Z0062"/>
<dbReference type="GeneID" id="913458"/>
<dbReference type="GeneID" id="93777382"/>
<dbReference type="KEGG" id="ece:Z0062"/>
<dbReference type="KEGG" id="ecs:ECs_0058"/>
<dbReference type="PATRIC" id="fig|386585.9.peg.157"/>
<dbReference type="eggNOG" id="COG0760">
    <property type="taxonomic scope" value="Bacteria"/>
</dbReference>
<dbReference type="HOGENOM" id="CLU_034646_11_0_6"/>
<dbReference type="OMA" id="HGWHIVQ"/>
<dbReference type="Proteomes" id="UP000000558">
    <property type="component" value="Chromosome"/>
</dbReference>
<dbReference type="Proteomes" id="UP000002519">
    <property type="component" value="Chromosome"/>
</dbReference>
<dbReference type="GO" id="GO:0030288">
    <property type="term" value="C:outer membrane-bounded periplasmic space"/>
    <property type="evidence" value="ECO:0007669"/>
    <property type="project" value="InterPro"/>
</dbReference>
<dbReference type="GO" id="GO:0042277">
    <property type="term" value="F:peptide binding"/>
    <property type="evidence" value="ECO:0007669"/>
    <property type="project" value="InterPro"/>
</dbReference>
<dbReference type="GO" id="GO:0003755">
    <property type="term" value="F:peptidyl-prolyl cis-trans isomerase activity"/>
    <property type="evidence" value="ECO:0007669"/>
    <property type="project" value="UniProtKB-UniRule"/>
</dbReference>
<dbReference type="GO" id="GO:0051082">
    <property type="term" value="F:unfolded protein binding"/>
    <property type="evidence" value="ECO:0007669"/>
    <property type="project" value="UniProtKB-UniRule"/>
</dbReference>
<dbReference type="GO" id="GO:0043165">
    <property type="term" value="P:Gram-negative-bacterium-type cell outer membrane assembly"/>
    <property type="evidence" value="ECO:0007669"/>
    <property type="project" value="InterPro"/>
</dbReference>
<dbReference type="GO" id="GO:0006457">
    <property type="term" value="P:protein folding"/>
    <property type="evidence" value="ECO:0007669"/>
    <property type="project" value="UniProtKB-UniRule"/>
</dbReference>
<dbReference type="GO" id="GO:0050821">
    <property type="term" value="P:protein stabilization"/>
    <property type="evidence" value="ECO:0007669"/>
    <property type="project" value="InterPro"/>
</dbReference>
<dbReference type="FunFam" id="1.10.4030.10:FF:000002">
    <property type="entry name" value="Chaperone SurA"/>
    <property type="match status" value="1"/>
</dbReference>
<dbReference type="FunFam" id="3.10.50.40:FF:000007">
    <property type="entry name" value="Chaperone SurA"/>
    <property type="match status" value="1"/>
</dbReference>
<dbReference type="Gene3D" id="3.10.50.40">
    <property type="match status" value="2"/>
</dbReference>
<dbReference type="Gene3D" id="1.10.4030.10">
    <property type="entry name" value="Porin chaperone SurA, peptide-binding domain"/>
    <property type="match status" value="2"/>
</dbReference>
<dbReference type="HAMAP" id="MF_01183">
    <property type="entry name" value="Chaperone_SurA"/>
    <property type="match status" value="1"/>
</dbReference>
<dbReference type="InterPro" id="IPR050280">
    <property type="entry name" value="OMP_Chaperone_SurA"/>
</dbReference>
<dbReference type="InterPro" id="IPR046357">
    <property type="entry name" value="PPIase_dom_sf"/>
</dbReference>
<dbReference type="InterPro" id="IPR000297">
    <property type="entry name" value="PPIase_PpiC"/>
</dbReference>
<dbReference type="InterPro" id="IPR023058">
    <property type="entry name" value="PPIase_PpiC_CS"/>
</dbReference>
<dbReference type="InterPro" id="IPR023034">
    <property type="entry name" value="PPIase_SurA"/>
</dbReference>
<dbReference type="InterPro" id="IPR015391">
    <property type="entry name" value="SurA_N"/>
</dbReference>
<dbReference type="InterPro" id="IPR027304">
    <property type="entry name" value="Trigger_fact/SurA_dom_sf"/>
</dbReference>
<dbReference type="NCBIfam" id="NF008038">
    <property type="entry name" value="PRK10770.1"/>
    <property type="match status" value="1"/>
</dbReference>
<dbReference type="PANTHER" id="PTHR47637">
    <property type="entry name" value="CHAPERONE SURA"/>
    <property type="match status" value="1"/>
</dbReference>
<dbReference type="PANTHER" id="PTHR47637:SF1">
    <property type="entry name" value="CHAPERONE SURA"/>
    <property type="match status" value="1"/>
</dbReference>
<dbReference type="Pfam" id="PF00639">
    <property type="entry name" value="Rotamase"/>
    <property type="match status" value="1"/>
</dbReference>
<dbReference type="Pfam" id="PF13616">
    <property type="entry name" value="Rotamase_3"/>
    <property type="match status" value="1"/>
</dbReference>
<dbReference type="Pfam" id="PF09312">
    <property type="entry name" value="SurA_N"/>
    <property type="match status" value="1"/>
</dbReference>
<dbReference type="SUPFAM" id="SSF54534">
    <property type="entry name" value="FKBP-like"/>
    <property type="match status" value="2"/>
</dbReference>
<dbReference type="SUPFAM" id="SSF109998">
    <property type="entry name" value="Triger factor/SurA peptide-binding domain-like"/>
    <property type="match status" value="1"/>
</dbReference>
<dbReference type="PROSITE" id="PS01096">
    <property type="entry name" value="PPIC_PPIASE_1"/>
    <property type="match status" value="2"/>
</dbReference>
<dbReference type="PROSITE" id="PS50198">
    <property type="entry name" value="PPIC_PPIASE_2"/>
    <property type="match status" value="2"/>
</dbReference>
<reference key="1">
    <citation type="journal article" date="2001" name="Nature">
        <title>Genome sequence of enterohaemorrhagic Escherichia coli O157:H7.</title>
        <authorList>
            <person name="Perna N.T."/>
            <person name="Plunkett G. III"/>
            <person name="Burland V."/>
            <person name="Mau B."/>
            <person name="Glasner J.D."/>
            <person name="Rose D.J."/>
            <person name="Mayhew G.F."/>
            <person name="Evans P.S."/>
            <person name="Gregor J."/>
            <person name="Kirkpatrick H.A."/>
            <person name="Posfai G."/>
            <person name="Hackett J."/>
            <person name="Klink S."/>
            <person name="Boutin A."/>
            <person name="Shao Y."/>
            <person name="Miller L."/>
            <person name="Grotbeck E.J."/>
            <person name="Davis N.W."/>
            <person name="Lim A."/>
            <person name="Dimalanta E.T."/>
            <person name="Potamousis K."/>
            <person name="Apodaca J."/>
            <person name="Anantharaman T.S."/>
            <person name="Lin J."/>
            <person name="Yen G."/>
            <person name="Schwartz D.C."/>
            <person name="Welch R.A."/>
            <person name="Blattner F.R."/>
        </authorList>
    </citation>
    <scope>NUCLEOTIDE SEQUENCE [LARGE SCALE GENOMIC DNA]</scope>
    <source>
        <strain>O157:H7 / EDL933 / ATCC 700927 / EHEC</strain>
    </source>
</reference>
<reference key="2">
    <citation type="journal article" date="2001" name="DNA Res.">
        <title>Complete genome sequence of enterohemorrhagic Escherichia coli O157:H7 and genomic comparison with a laboratory strain K-12.</title>
        <authorList>
            <person name="Hayashi T."/>
            <person name="Makino K."/>
            <person name="Ohnishi M."/>
            <person name="Kurokawa K."/>
            <person name="Ishii K."/>
            <person name="Yokoyama K."/>
            <person name="Han C.-G."/>
            <person name="Ohtsubo E."/>
            <person name="Nakayama K."/>
            <person name="Murata T."/>
            <person name="Tanaka M."/>
            <person name="Tobe T."/>
            <person name="Iida T."/>
            <person name="Takami H."/>
            <person name="Honda T."/>
            <person name="Sasakawa C."/>
            <person name="Ogasawara N."/>
            <person name="Yasunaga T."/>
            <person name="Kuhara S."/>
            <person name="Shiba T."/>
            <person name="Hattori M."/>
            <person name="Shinagawa H."/>
        </authorList>
    </citation>
    <scope>NUCLEOTIDE SEQUENCE [LARGE SCALE GENOMIC DNA]</scope>
    <source>
        <strain>O157:H7 / Sakai / RIMD 0509952 / EHEC</strain>
    </source>
</reference>